<reference key="1">
    <citation type="journal article" date="2002" name="Nature">
        <title>The genome sequence and structure of rice chromosome 1.</title>
        <authorList>
            <person name="Sasaki T."/>
            <person name="Matsumoto T."/>
            <person name="Yamamoto K."/>
            <person name="Sakata K."/>
            <person name="Baba T."/>
            <person name="Katayose Y."/>
            <person name="Wu J."/>
            <person name="Niimura Y."/>
            <person name="Cheng Z."/>
            <person name="Nagamura Y."/>
            <person name="Antonio B.A."/>
            <person name="Kanamori H."/>
            <person name="Hosokawa S."/>
            <person name="Masukawa M."/>
            <person name="Arikawa K."/>
            <person name="Chiden Y."/>
            <person name="Hayashi M."/>
            <person name="Okamoto M."/>
            <person name="Ando T."/>
            <person name="Aoki H."/>
            <person name="Arita K."/>
            <person name="Hamada M."/>
            <person name="Harada C."/>
            <person name="Hijishita S."/>
            <person name="Honda M."/>
            <person name="Ichikawa Y."/>
            <person name="Idonuma A."/>
            <person name="Iijima M."/>
            <person name="Ikeda M."/>
            <person name="Ikeno M."/>
            <person name="Ito S."/>
            <person name="Ito T."/>
            <person name="Ito Y."/>
            <person name="Ito Y."/>
            <person name="Iwabuchi A."/>
            <person name="Kamiya K."/>
            <person name="Karasawa W."/>
            <person name="Katagiri S."/>
            <person name="Kikuta A."/>
            <person name="Kobayashi N."/>
            <person name="Kono I."/>
            <person name="Machita K."/>
            <person name="Maehara T."/>
            <person name="Mizuno H."/>
            <person name="Mizubayashi T."/>
            <person name="Mukai Y."/>
            <person name="Nagasaki H."/>
            <person name="Nakashima M."/>
            <person name="Nakama Y."/>
            <person name="Nakamichi Y."/>
            <person name="Nakamura M."/>
            <person name="Namiki N."/>
            <person name="Negishi M."/>
            <person name="Ohta I."/>
            <person name="Ono N."/>
            <person name="Saji S."/>
            <person name="Sakai K."/>
            <person name="Shibata M."/>
            <person name="Shimokawa T."/>
            <person name="Shomura A."/>
            <person name="Song J."/>
            <person name="Takazaki Y."/>
            <person name="Terasawa K."/>
            <person name="Tsuji K."/>
            <person name="Waki K."/>
            <person name="Yamagata H."/>
            <person name="Yamane H."/>
            <person name="Yoshiki S."/>
            <person name="Yoshihara R."/>
            <person name="Yukawa K."/>
            <person name="Zhong H."/>
            <person name="Iwama H."/>
            <person name="Endo T."/>
            <person name="Ito H."/>
            <person name="Hahn J.H."/>
            <person name="Kim H.-I."/>
            <person name="Eun M.-Y."/>
            <person name="Yano M."/>
            <person name="Jiang J."/>
            <person name="Gojobori T."/>
        </authorList>
    </citation>
    <scope>NUCLEOTIDE SEQUENCE [LARGE SCALE GENOMIC DNA]</scope>
    <source>
        <strain>cv. Nipponbare</strain>
    </source>
</reference>
<reference key="2">
    <citation type="journal article" date="2005" name="Nature">
        <title>The map-based sequence of the rice genome.</title>
        <authorList>
            <consortium name="International rice genome sequencing project (IRGSP)"/>
        </authorList>
    </citation>
    <scope>NUCLEOTIDE SEQUENCE [LARGE SCALE GENOMIC DNA]</scope>
    <source>
        <strain>cv. Nipponbare</strain>
    </source>
</reference>
<reference key="3">
    <citation type="journal article" date="2008" name="Nucleic Acids Res.">
        <title>The rice annotation project database (RAP-DB): 2008 update.</title>
        <authorList>
            <consortium name="The rice annotation project (RAP)"/>
        </authorList>
    </citation>
    <scope>GENOME REANNOTATION</scope>
    <source>
        <strain>cv. Nipponbare</strain>
    </source>
</reference>
<reference key="4">
    <citation type="journal article" date="2013" name="Rice">
        <title>Improvement of the Oryza sativa Nipponbare reference genome using next generation sequence and optical map data.</title>
        <authorList>
            <person name="Kawahara Y."/>
            <person name="de la Bastide M."/>
            <person name="Hamilton J.P."/>
            <person name="Kanamori H."/>
            <person name="McCombie W.R."/>
            <person name="Ouyang S."/>
            <person name="Schwartz D.C."/>
            <person name="Tanaka T."/>
            <person name="Wu J."/>
            <person name="Zhou S."/>
            <person name="Childs K.L."/>
            <person name="Davidson R.M."/>
            <person name="Lin H."/>
            <person name="Quesada-Ocampo L."/>
            <person name="Vaillancourt B."/>
            <person name="Sakai H."/>
            <person name="Lee S.S."/>
            <person name="Kim J."/>
            <person name="Numa H."/>
            <person name="Itoh T."/>
            <person name="Buell C.R."/>
            <person name="Matsumoto T."/>
        </authorList>
    </citation>
    <scope>GENOME REANNOTATION</scope>
    <source>
        <strain>cv. Nipponbare</strain>
    </source>
</reference>
<reference key="5">
    <citation type="journal article" date="2005" name="PLoS Biol.">
        <title>The genomes of Oryza sativa: a history of duplications.</title>
        <authorList>
            <person name="Yu J."/>
            <person name="Wang J."/>
            <person name="Lin W."/>
            <person name="Li S."/>
            <person name="Li H."/>
            <person name="Zhou J."/>
            <person name="Ni P."/>
            <person name="Dong W."/>
            <person name="Hu S."/>
            <person name="Zeng C."/>
            <person name="Zhang J."/>
            <person name="Zhang Y."/>
            <person name="Li R."/>
            <person name="Xu Z."/>
            <person name="Li S."/>
            <person name="Li X."/>
            <person name="Zheng H."/>
            <person name="Cong L."/>
            <person name="Lin L."/>
            <person name="Yin J."/>
            <person name="Geng J."/>
            <person name="Li G."/>
            <person name="Shi J."/>
            <person name="Liu J."/>
            <person name="Lv H."/>
            <person name="Li J."/>
            <person name="Wang J."/>
            <person name="Deng Y."/>
            <person name="Ran L."/>
            <person name="Shi X."/>
            <person name="Wang X."/>
            <person name="Wu Q."/>
            <person name="Li C."/>
            <person name="Ren X."/>
            <person name="Wang J."/>
            <person name="Wang X."/>
            <person name="Li D."/>
            <person name="Liu D."/>
            <person name="Zhang X."/>
            <person name="Ji Z."/>
            <person name="Zhao W."/>
            <person name="Sun Y."/>
            <person name="Zhang Z."/>
            <person name="Bao J."/>
            <person name="Han Y."/>
            <person name="Dong L."/>
            <person name="Ji J."/>
            <person name="Chen P."/>
            <person name="Wu S."/>
            <person name="Liu J."/>
            <person name="Xiao Y."/>
            <person name="Bu D."/>
            <person name="Tan J."/>
            <person name="Yang L."/>
            <person name="Ye C."/>
            <person name="Zhang J."/>
            <person name="Xu J."/>
            <person name="Zhou Y."/>
            <person name="Yu Y."/>
            <person name="Zhang B."/>
            <person name="Zhuang S."/>
            <person name="Wei H."/>
            <person name="Liu B."/>
            <person name="Lei M."/>
            <person name="Yu H."/>
            <person name="Li Y."/>
            <person name="Xu H."/>
            <person name="Wei S."/>
            <person name="He X."/>
            <person name="Fang L."/>
            <person name="Zhang Z."/>
            <person name="Zhang Y."/>
            <person name="Huang X."/>
            <person name="Su Z."/>
            <person name="Tong W."/>
            <person name="Li J."/>
            <person name="Tong Z."/>
            <person name="Li S."/>
            <person name="Ye J."/>
            <person name="Wang L."/>
            <person name="Fang L."/>
            <person name="Lei T."/>
            <person name="Chen C.-S."/>
            <person name="Chen H.-C."/>
            <person name="Xu Z."/>
            <person name="Li H."/>
            <person name="Huang H."/>
            <person name="Zhang F."/>
            <person name="Xu H."/>
            <person name="Li N."/>
            <person name="Zhao C."/>
            <person name="Li S."/>
            <person name="Dong L."/>
            <person name="Huang Y."/>
            <person name="Li L."/>
            <person name="Xi Y."/>
            <person name="Qi Q."/>
            <person name="Li W."/>
            <person name="Zhang B."/>
            <person name="Hu W."/>
            <person name="Zhang Y."/>
            <person name="Tian X."/>
            <person name="Jiao Y."/>
            <person name="Liang X."/>
            <person name="Jin J."/>
            <person name="Gao L."/>
            <person name="Zheng W."/>
            <person name="Hao B."/>
            <person name="Liu S.-M."/>
            <person name="Wang W."/>
            <person name="Yuan L."/>
            <person name="Cao M."/>
            <person name="McDermott J."/>
            <person name="Samudrala R."/>
            <person name="Wang J."/>
            <person name="Wong G.K.-S."/>
            <person name="Yang H."/>
        </authorList>
    </citation>
    <scope>NUCLEOTIDE SEQUENCE [LARGE SCALE GENOMIC DNA]</scope>
    <source>
        <strain>cv. Nipponbare</strain>
    </source>
</reference>
<reference key="6">
    <citation type="journal article" date="2003" name="Science">
        <title>Collection, mapping, and annotation of over 28,000 cDNA clones from japonica rice.</title>
        <authorList>
            <consortium name="The rice full-length cDNA consortium"/>
        </authorList>
    </citation>
    <scope>NUCLEOTIDE SEQUENCE [LARGE SCALE MRNA]</scope>
    <source>
        <strain>cv. Nipponbare</strain>
    </source>
</reference>
<gene>
    <name type="ordered locus">Os01g0618400</name>
    <name type="ordered locus">LOC_Os01g43120</name>
    <name type="ORF">B1040D09.6</name>
    <name evidence="5" type="ORF">OsJ_02628</name>
</gene>
<accession>Q5ZBH5</accession>
<accession>B7EDN0</accession>
<dbReference type="EC" id="3.6.4.13"/>
<dbReference type="EMBL" id="AP003328">
    <property type="protein sequence ID" value="BAD61515.1"/>
    <property type="molecule type" value="Genomic_DNA"/>
</dbReference>
<dbReference type="EMBL" id="AP008207">
    <property type="protein sequence ID" value="BAF05504.1"/>
    <property type="molecule type" value="Genomic_DNA"/>
</dbReference>
<dbReference type="EMBL" id="AP014957">
    <property type="protein sequence ID" value="BAS73190.1"/>
    <property type="molecule type" value="Genomic_DNA"/>
</dbReference>
<dbReference type="EMBL" id="CM000138">
    <property type="protein sequence ID" value="EEE54997.1"/>
    <property type="molecule type" value="Genomic_DNA"/>
</dbReference>
<dbReference type="EMBL" id="AK067570">
    <property type="protein sequence ID" value="BAG90477.1"/>
    <property type="molecule type" value="mRNA"/>
</dbReference>
<dbReference type="RefSeq" id="XP_015621602.1">
    <property type="nucleotide sequence ID" value="XM_015766116.1"/>
</dbReference>
<dbReference type="SMR" id="Q5ZBH5"/>
<dbReference type="FunCoup" id="Q5ZBH5">
    <property type="interactions" value="59"/>
</dbReference>
<dbReference type="STRING" id="39947.Q5ZBH5"/>
<dbReference type="PaxDb" id="39947-Q5ZBH5"/>
<dbReference type="EnsemblPlants" id="Os01t0618400-01">
    <property type="protein sequence ID" value="Os01t0618400-01"/>
    <property type="gene ID" value="Os01g0618400"/>
</dbReference>
<dbReference type="Gramene" id="Os01t0618400-01">
    <property type="protein sequence ID" value="Os01t0618400-01"/>
    <property type="gene ID" value="Os01g0618400"/>
</dbReference>
<dbReference type="KEGG" id="dosa:Os01g0618400"/>
<dbReference type="eggNOG" id="KOG0342">
    <property type="taxonomic scope" value="Eukaryota"/>
</dbReference>
<dbReference type="HOGENOM" id="CLU_003041_26_6_1"/>
<dbReference type="InParanoid" id="Q5ZBH5"/>
<dbReference type="OMA" id="AYKVMLF"/>
<dbReference type="OrthoDB" id="193716at2759"/>
<dbReference type="Proteomes" id="UP000000763">
    <property type="component" value="Chromosome 1"/>
</dbReference>
<dbReference type="Proteomes" id="UP000007752">
    <property type="component" value="Chromosome 1"/>
</dbReference>
<dbReference type="Proteomes" id="UP000059680">
    <property type="component" value="Chromosome 1"/>
</dbReference>
<dbReference type="GO" id="GO:0005524">
    <property type="term" value="F:ATP binding"/>
    <property type="evidence" value="ECO:0007669"/>
    <property type="project" value="UniProtKB-KW"/>
</dbReference>
<dbReference type="GO" id="GO:0016887">
    <property type="term" value="F:ATP hydrolysis activity"/>
    <property type="evidence" value="ECO:0007669"/>
    <property type="project" value="RHEA"/>
</dbReference>
<dbReference type="GO" id="GO:0003723">
    <property type="term" value="F:RNA binding"/>
    <property type="evidence" value="ECO:0007669"/>
    <property type="project" value="UniProtKB-KW"/>
</dbReference>
<dbReference type="GO" id="GO:0003724">
    <property type="term" value="F:RNA helicase activity"/>
    <property type="evidence" value="ECO:0007669"/>
    <property type="project" value="UniProtKB-EC"/>
</dbReference>
<dbReference type="CDD" id="cd17964">
    <property type="entry name" value="DEADc_MSS116"/>
    <property type="match status" value="1"/>
</dbReference>
<dbReference type="CDD" id="cd18787">
    <property type="entry name" value="SF2_C_DEAD"/>
    <property type="match status" value="1"/>
</dbReference>
<dbReference type="Gene3D" id="3.40.50.300">
    <property type="entry name" value="P-loop containing nucleotide triphosphate hydrolases"/>
    <property type="match status" value="2"/>
</dbReference>
<dbReference type="InterPro" id="IPR011545">
    <property type="entry name" value="DEAD/DEAH_box_helicase_dom"/>
</dbReference>
<dbReference type="InterPro" id="IPR014001">
    <property type="entry name" value="Helicase_ATP-bd"/>
</dbReference>
<dbReference type="InterPro" id="IPR001650">
    <property type="entry name" value="Helicase_C-like"/>
</dbReference>
<dbReference type="InterPro" id="IPR027417">
    <property type="entry name" value="P-loop_NTPase"/>
</dbReference>
<dbReference type="InterPro" id="IPR000629">
    <property type="entry name" value="RNA-helicase_DEAD-box_CS"/>
</dbReference>
<dbReference type="InterPro" id="IPR014014">
    <property type="entry name" value="RNA_helicase_DEAD_Q_motif"/>
</dbReference>
<dbReference type="PANTHER" id="PTHR24031">
    <property type="entry name" value="RNA HELICASE"/>
    <property type="match status" value="1"/>
</dbReference>
<dbReference type="Pfam" id="PF00270">
    <property type="entry name" value="DEAD"/>
    <property type="match status" value="1"/>
</dbReference>
<dbReference type="Pfam" id="PF00271">
    <property type="entry name" value="Helicase_C"/>
    <property type="match status" value="1"/>
</dbReference>
<dbReference type="SMART" id="SM00487">
    <property type="entry name" value="DEXDc"/>
    <property type="match status" value="1"/>
</dbReference>
<dbReference type="SMART" id="SM00490">
    <property type="entry name" value="HELICc"/>
    <property type="match status" value="1"/>
</dbReference>
<dbReference type="SUPFAM" id="SSF52540">
    <property type="entry name" value="P-loop containing nucleoside triphosphate hydrolases"/>
    <property type="match status" value="1"/>
</dbReference>
<dbReference type="PROSITE" id="PS00039">
    <property type="entry name" value="DEAD_ATP_HELICASE"/>
    <property type="match status" value="1"/>
</dbReference>
<dbReference type="PROSITE" id="PS51192">
    <property type="entry name" value="HELICASE_ATP_BIND_1"/>
    <property type="match status" value="1"/>
</dbReference>
<dbReference type="PROSITE" id="PS51194">
    <property type="entry name" value="HELICASE_CTER"/>
    <property type="match status" value="1"/>
</dbReference>
<dbReference type="PROSITE" id="PS51195">
    <property type="entry name" value="Q_MOTIF"/>
    <property type="match status" value="1"/>
</dbReference>
<keyword id="KW-0067">ATP-binding</keyword>
<keyword id="KW-0347">Helicase</keyword>
<keyword id="KW-0378">Hydrolase</keyword>
<keyword id="KW-0547">Nucleotide-binding</keyword>
<keyword id="KW-1185">Reference proteome</keyword>
<keyword id="KW-0694">RNA-binding</keyword>
<organism>
    <name type="scientific">Oryza sativa subsp. japonica</name>
    <name type="common">Rice</name>
    <dbReference type="NCBI Taxonomy" id="39947"/>
    <lineage>
        <taxon>Eukaryota</taxon>
        <taxon>Viridiplantae</taxon>
        <taxon>Streptophyta</taxon>
        <taxon>Embryophyta</taxon>
        <taxon>Tracheophyta</taxon>
        <taxon>Spermatophyta</taxon>
        <taxon>Magnoliopsida</taxon>
        <taxon>Liliopsida</taxon>
        <taxon>Poales</taxon>
        <taxon>Poaceae</taxon>
        <taxon>BOP clade</taxon>
        <taxon>Oryzoideae</taxon>
        <taxon>Oryzeae</taxon>
        <taxon>Oryzinae</taxon>
        <taxon>Oryza</taxon>
        <taxon>Oryza sativa</taxon>
    </lineage>
</organism>
<proteinExistence type="evidence at transcript level"/>
<sequence length="594" mass="65635">MAAGDLLLRTQSGLPVLARAFPSCLCLRVPARRRRGAPPLTAAKVDVADAVGRRVRSGGAAVPKRRRSRRDAEEEEEEGLAFSRVVTGRGRGVREEGVAEGEAPEFDAAKSGDESGGVDGSYLSDTRFDQCTISPLSLKAVKDAGYERMTQVQEATLPVILQGKDVLAKAKTGTGKTVAFLLPAIEVLSALPNSRRDQLRPSINLLVMCPTRELAIQVAVEAKKLLKYHRSLGVQVVIGGTRLTQEQRSMQANPCQILVATPGRLKDHVENTPGFSTRLKGVKVLVLDEADRLLDMGFRRDIERIIASVPKERQTLLFSATVPEEVRQISHIAMKKNYKFINTVKDGDEETHAQVSQMFMIAPLDLHFSILYDVLKKHVAEDADYKVIIFCTTAMVTKLVAEILSQLRLNIREIHSRKSQSARTKVSDEFRKSRGLILVSSDVSARGVDYPDVTLVIQVGVPADRQQYIHRLGRTGRKGKEGQGLLLLAPWEKYFLSSIKDLSISEATVPSVDSSTQTIVKDAVRKVEMRSKECAYQAWLGYYNSNKTIGREKSRLVKLAEEFSQSMELSVPPAIPKQILRKMGLNNVPGLRST</sequence>
<comment type="catalytic activity">
    <reaction>
        <text>ATP + H2O = ADP + phosphate + H(+)</text>
        <dbReference type="Rhea" id="RHEA:13065"/>
        <dbReference type="ChEBI" id="CHEBI:15377"/>
        <dbReference type="ChEBI" id="CHEBI:15378"/>
        <dbReference type="ChEBI" id="CHEBI:30616"/>
        <dbReference type="ChEBI" id="CHEBI:43474"/>
        <dbReference type="ChEBI" id="CHEBI:456216"/>
        <dbReference type="EC" id="3.6.4.13"/>
    </reaction>
</comment>
<comment type="domain">
    <text>The Q motif is unique to and characteristic of the DEAD box family of RNA helicases and controls ATP binding and hydrolysis.</text>
</comment>
<comment type="similarity">
    <text evidence="4">Belongs to the DEAD box helicase family.</text>
</comment>
<evidence type="ECO:0000255" key="1">
    <source>
        <dbReference type="PROSITE-ProRule" id="PRU00541"/>
    </source>
</evidence>
<evidence type="ECO:0000255" key="2">
    <source>
        <dbReference type="PROSITE-ProRule" id="PRU00542"/>
    </source>
</evidence>
<evidence type="ECO:0000256" key="3">
    <source>
        <dbReference type="SAM" id="MobiDB-lite"/>
    </source>
</evidence>
<evidence type="ECO:0000305" key="4"/>
<evidence type="ECO:0000312" key="5">
    <source>
        <dbReference type="EMBL" id="EEE54997.1"/>
    </source>
</evidence>
<name>RH25_ORYSJ</name>
<feature type="chain" id="PRO_0000282512" description="DEAD-box ATP-dependent RNA helicase 25">
    <location>
        <begin position="1"/>
        <end position="594"/>
    </location>
</feature>
<feature type="domain" description="Helicase ATP-binding" evidence="1">
    <location>
        <begin position="157"/>
        <end position="340"/>
    </location>
</feature>
<feature type="domain" description="Helicase C-terminal" evidence="2">
    <location>
        <begin position="370"/>
        <end position="520"/>
    </location>
</feature>
<feature type="region of interest" description="Disordered" evidence="3">
    <location>
        <begin position="56"/>
        <end position="80"/>
    </location>
</feature>
<feature type="region of interest" description="Disordered" evidence="3">
    <location>
        <begin position="92"/>
        <end position="121"/>
    </location>
</feature>
<feature type="short sequence motif" description="Q motif">
    <location>
        <begin position="126"/>
        <end position="154"/>
    </location>
</feature>
<feature type="short sequence motif" description="DEAD box">
    <location>
        <begin position="288"/>
        <end position="291"/>
    </location>
</feature>
<feature type="binding site" evidence="1">
    <location>
        <begin position="170"/>
        <end position="177"/>
    </location>
    <ligand>
        <name>ATP</name>
        <dbReference type="ChEBI" id="CHEBI:30616"/>
    </ligand>
</feature>
<protein>
    <recommendedName>
        <fullName>DEAD-box ATP-dependent RNA helicase 25</fullName>
        <ecNumber>3.6.4.13</ecNumber>
    </recommendedName>
</protein>